<comment type="function">
    <text evidence="1">Catalyzes the hydrolysis of the adenine ring of phosphoribosyl-AMP.</text>
</comment>
<comment type="catalytic activity">
    <reaction evidence="1">
        <text>1-(5-phospho-beta-D-ribosyl)-5'-AMP + H2O = 1-(5-phospho-beta-D-ribosyl)-5-[(5-phospho-beta-D-ribosylamino)methylideneamino]imidazole-4-carboxamide</text>
        <dbReference type="Rhea" id="RHEA:20049"/>
        <dbReference type="ChEBI" id="CHEBI:15377"/>
        <dbReference type="ChEBI" id="CHEBI:58435"/>
        <dbReference type="ChEBI" id="CHEBI:59457"/>
        <dbReference type="EC" id="3.5.4.19"/>
    </reaction>
</comment>
<comment type="cofactor">
    <cofactor evidence="1">
        <name>Mg(2+)</name>
        <dbReference type="ChEBI" id="CHEBI:18420"/>
    </cofactor>
    <text evidence="1">Binds 1 Mg(2+) ion per subunit.</text>
</comment>
<comment type="cofactor">
    <cofactor evidence="1">
        <name>Zn(2+)</name>
        <dbReference type="ChEBI" id="CHEBI:29105"/>
    </cofactor>
    <text evidence="1">Binds 1 zinc ion per subunit.</text>
</comment>
<comment type="pathway">
    <text evidence="1">Amino-acid biosynthesis; L-histidine biosynthesis; L-histidine from 5-phospho-alpha-D-ribose 1-diphosphate: step 3/9.</text>
</comment>
<comment type="subunit">
    <text evidence="1">Homodimer.</text>
</comment>
<comment type="subcellular location">
    <subcellularLocation>
        <location evidence="1">Cytoplasm</location>
    </subcellularLocation>
</comment>
<comment type="similarity">
    <text evidence="1">Belongs to the PRA-CH family.</text>
</comment>
<protein>
    <recommendedName>
        <fullName evidence="1">Phosphoribosyl-AMP cyclohydrolase</fullName>
        <shortName evidence="1">PRA-CH</shortName>
        <ecNumber evidence="1">3.5.4.19</ecNumber>
    </recommendedName>
</protein>
<evidence type="ECO:0000255" key="1">
    <source>
        <dbReference type="HAMAP-Rule" id="MF_01021"/>
    </source>
</evidence>
<dbReference type="EC" id="3.5.4.19" evidence="1"/>
<dbReference type="EMBL" id="CP000758">
    <property type="protein sequence ID" value="ABS14875.1"/>
    <property type="molecule type" value="Genomic_DNA"/>
</dbReference>
<dbReference type="RefSeq" id="WP_012092052.1">
    <property type="nucleotide sequence ID" value="NC_009667.1"/>
</dbReference>
<dbReference type="SMR" id="A6X0X1"/>
<dbReference type="STRING" id="439375.Oant_2159"/>
<dbReference type="KEGG" id="oan:Oant_2159"/>
<dbReference type="PATRIC" id="fig|439375.7.peg.2267"/>
<dbReference type="eggNOG" id="COG0139">
    <property type="taxonomic scope" value="Bacteria"/>
</dbReference>
<dbReference type="HOGENOM" id="CLU_048577_5_0_5"/>
<dbReference type="PhylomeDB" id="A6X0X1"/>
<dbReference type="UniPathway" id="UPA00031">
    <property type="reaction ID" value="UER00008"/>
</dbReference>
<dbReference type="Proteomes" id="UP000002301">
    <property type="component" value="Chromosome 1"/>
</dbReference>
<dbReference type="GO" id="GO:0005737">
    <property type="term" value="C:cytoplasm"/>
    <property type="evidence" value="ECO:0007669"/>
    <property type="project" value="UniProtKB-SubCell"/>
</dbReference>
<dbReference type="GO" id="GO:0000287">
    <property type="term" value="F:magnesium ion binding"/>
    <property type="evidence" value="ECO:0007669"/>
    <property type="project" value="UniProtKB-UniRule"/>
</dbReference>
<dbReference type="GO" id="GO:0004635">
    <property type="term" value="F:phosphoribosyl-AMP cyclohydrolase activity"/>
    <property type="evidence" value="ECO:0007669"/>
    <property type="project" value="UniProtKB-UniRule"/>
</dbReference>
<dbReference type="GO" id="GO:0008270">
    <property type="term" value="F:zinc ion binding"/>
    <property type="evidence" value="ECO:0007669"/>
    <property type="project" value="UniProtKB-UniRule"/>
</dbReference>
<dbReference type="GO" id="GO:0000105">
    <property type="term" value="P:L-histidine biosynthetic process"/>
    <property type="evidence" value="ECO:0007669"/>
    <property type="project" value="UniProtKB-UniRule"/>
</dbReference>
<dbReference type="FunFam" id="3.10.20.810:FF:000001">
    <property type="entry name" value="Histidine biosynthesis bifunctional protein HisIE"/>
    <property type="match status" value="1"/>
</dbReference>
<dbReference type="Gene3D" id="4.10.80.70">
    <property type="match status" value="1"/>
</dbReference>
<dbReference type="Gene3D" id="3.10.20.810">
    <property type="entry name" value="Phosphoribosyl-AMP cyclohydrolase"/>
    <property type="match status" value="1"/>
</dbReference>
<dbReference type="HAMAP" id="MF_01021">
    <property type="entry name" value="HisI"/>
    <property type="match status" value="1"/>
</dbReference>
<dbReference type="InterPro" id="IPR026660">
    <property type="entry name" value="PRA-CH"/>
</dbReference>
<dbReference type="InterPro" id="IPR002496">
    <property type="entry name" value="PRib_AMP_CycHydrolase_dom"/>
</dbReference>
<dbReference type="InterPro" id="IPR038019">
    <property type="entry name" value="PRib_AMP_CycHydrolase_sf"/>
</dbReference>
<dbReference type="NCBIfam" id="NF000768">
    <property type="entry name" value="PRK00051.1"/>
    <property type="match status" value="1"/>
</dbReference>
<dbReference type="PANTHER" id="PTHR42945">
    <property type="entry name" value="HISTIDINE BIOSYNTHESIS BIFUNCTIONAL PROTEIN"/>
    <property type="match status" value="1"/>
</dbReference>
<dbReference type="PANTHER" id="PTHR42945:SF1">
    <property type="entry name" value="HISTIDINE BIOSYNTHESIS BIFUNCTIONAL PROTEIN HIS7"/>
    <property type="match status" value="1"/>
</dbReference>
<dbReference type="Pfam" id="PF01502">
    <property type="entry name" value="PRA-CH"/>
    <property type="match status" value="1"/>
</dbReference>
<dbReference type="SUPFAM" id="SSF141734">
    <property type="entry name" value="HisI-like"/>
    <property type="match status" value="1"/>
</dbReference>
<reference key="1">
    <citation type="journal article" date="2011" name="J. Bacteriol.">
        <title>Genome of Ochrobactrum anthropi ATCC 49188 T, a versatile opportunistic pathogen and symbiont of several eukaryotic hosts.</title>
        <authorList>
            <person name="Chain P.S."/>
            <person name="Lang D.M."/>
            <person name="Comerci D.J."/>
            <person name="Malfatti S.A."/>
            <person name="Vergez L.M."/>
            <person name="Shin M."/>
            <person name="Ugalde R.A."/>
            <person name="Garcia E."/>
            <person name="Tolmasky M.E."/>
        </authorList>
    </citation>
    <scope>NUCLEOTIDE SEQUENCE [LARGE SCALE GENOMIC DNA]</scope>
    <source>
        <strain>ATCC 49188 / DSM 6882 / CCUG 24695 / JCM 21032 / LMG 3331 / NBRC 15819 / NCTC 12168 / Alc 37</strain>
    </source>
</reference>
<proteinExistence type="inferred from homology"/>
<organism>
    <name type="scientific">Brucella anthropi (strain ATCC 49188 / DSM 6882 / CCUG 24695 / JCM 21032 / LMG 3331 / NBRC 15819 / NCTC 12168 / Alc 37)</name>
    <name type="common">Ochrobactrum anthropi</name>
    <dbReference type="NCBI Taxonomy" id="439375"/>
    <lineage>
        <taxon>Bacteria</taxon>
        <taxon>Pseudomonadati</taxon>
        <taxon>Pseudomonadota</taxon>
        <taxon>Alphaproteobacteria</taxon>
        <taxon>Hyphomicrobiales</taxon>
        <taxon>Brucellaceae</taxon>
        <taxon>Brucella/Ochrobactrum group</taxon>
        <taxon>Brucella</taxon>
    </lineage>
</organism>
<feature type="chain" id="PRO_0000319702" description="Phosphoribosyl-AMP cyclohydrolase">
    <location>
        <begin position="1"/>
        <end position="141"/>
    </location>
</feature>
<feature type="binding site" evidence="1">
    <location>
        <position position="91"/>
    </location>
    <ligand>
        <name>Mg(2+)</name>
        <dbReference type="ChEBI" id="CHEBI:18420"/>
    </ligand>
</feature>
<feature type="binding site" evidence="1">
    <location>
        <position position="92"/>
    </location>
    <ligand>
        <name>Zn(2+)</name>
        <dbReference type="ChEBI" id="CHEBI:29105"/>
        <note>ligand shared between dimeric partners</note>
    </ligand>
</feature>
<feature type="binding site" evidence="1">
    <location>
        <position position="93"/>
    </location>
    <ligand>
        <name>Mg(2+)</name>
        <dbReference type="ChEBI" id="CHEBI:18420"/>
    </ligand>
</feature>
<feature type="binding site" evidence="1">
    <location>
        <position position="95"/>
    </location>
    <ligand>
        <name>Mg(2+)</name>
        <dbReference type="ChEBI" id="CHEBI:18420"/>
    </ligand>
</feature>
<feature type="binding site" evidence="1">
    <location>
        <position position="110"/>
    </location>
    <ligand>
        <name>Zn(2+)</name>
        <dbReference type="ChEBI" id="CHEBI:29105"/>
        <note>ligand shared between dimeric partners</note>
    </ligand>
</feature>
<feature type="binding site" evidence="1">
    <location>
        <position position="117"/>
    </location>
    <ligand>
        <name>Zn(2+)</name>
        <dbReference type="ChEBI" id="CHEBI:29105"/>
        <note>ligand shared between dimeric partners</note>
    </ligand>
</feature>
<keyword id="KW-0028">Amino-acid biosynthesis</keyword>
<keyword id="KW-0963">Cytoplasm</keyword>
<keyword id="KW-0368">Histidine biosynthesis</keyword>
<keyword id="KW-0378">Hydrolase</keyword>
<keyword id="KW-0460">Magnesium</keyword>
<keyword id="KW-0479">Metal-binding</keyword>
<keyword id="KW-1185">Reference proteome</keyword>
<keyword id="KW-0862">Zinc</keyword>
<sequence length="141" mass="15567">MSFFPAQPSDKKAIEEGAAFMPRFDASGLITAVVTDARDGELLMVAHMNEEALRLTLETGIAHYWSRSRGKLWKKGETSGNLQSVVELRTDCDQDALWLKVRVAGDGPTCHTGRRSCFYRQVVAENGDISLAIEGACDHEH</sequence>
<gene>
    <name evidence="1" type="primary">hisI</name>
    <name type="ordered locus">Oant_2159</name>
</gene>
<name>HIS3_BRUA4</name>
<accession>A6X0X1</accession>